<proteinExistence type="inferred from homology"/>
<reference key="1">
    <citation type="submission" date="2009-05" db="EMBL/GenBank/DDBJ databases">
        <title>Complete sequence of Tolumonas auensis DSM 9187.</title>
        <authorList>
            <consortium name="US DOE Joint Genome Institute"/>
            <person name="Lucas S."/>
            <person name="Copeland A."/>
            <person name="Lapidus A."/>
            <person name="Glavina del Rio T."/>
            <person name="Tice H."/>
            <person name="Bruce D."/>
            <person name="Goodwin L."/>
            <person name="Pitluck S."/>
            <person name="Chertkov O."/>
            <person name="Brettin T."/>
            <person name="Detter J.C."/>
            <person name="Han C."/>
            <person name="Larimer F."/>
            <person name="Land M."/>
            <person name="Hauser L."/>
            <person name="Kyrpides N."/>
            <person name="Mikhailova N."/>
            <person name="Spring S."/>
            <person name="Beller H."/>
        </authorList>
    </citation>
    <scope>NUCLEOTIDE SEQUENCE [LARGE SCALE GENOMIC DNA]</scope>
    <source>
        <strain>DSM 9187 / NBRC 110442 / TA 4</strain>
    </source>
</reference>
<organism>
    <name type="scientific">Tolumonas auensis (strain DSM 9187 / NBRC 110442 / TA 4)</name>
    <dbReference type="NCBI Taxonomy" id="595494"/>
    <lineage>
        <taxon>Bacteria</taxon>
        <taxon>Pseudomonadati</taxon>
        <taxon>Pseudomonadota</taxon>
        <taxon>Gammaproteobacteria</taxon>
        <taxon>Aeromonadales</taxon>
        <taxon>Aeromonadaceae</taxon>
        <taxon>Tolumonas</taxon>
    </lineage>
</organism>
<name>RPOA_TOLAT</name>
<dbReference type="EC" id="2.7.7.6" evidence="1"/>
<dbReference type="EMBL" id="CP001616">
    <property type="protein sequence ID" value="ACQ91754.1"/>
    <property type="molecule type" value="Genomic_DNA"/>
</dbReference>
<dbReference type="RefSeq" id="WP_012728353.1">
    <property type="nucleotide sequence ID" value="NC_012691.1"/>
</dbReference>
<dbReference type="SMR" id="C4L7V5"/>
<dbReference type="STRING" id="595494.Tola_0124"/>
<dbReference type="KEGG" id="tau:Tola_0124"/>
<dbReference type="eggNOG" id="COG0202">
    <property type="taxonomic scope" value="Bacteria"/>
</dbReference>
<dbReference type="HOGENOM" id="CLU_053084_0_0_6"/>
<dbReference type="OrthoDB" id="9805706at2"/>
<dbReference type="Proteomes" id="UP000009073">
    <property type="component" value="Chromosome"/>
</dbReference>
<dbReference type="GO" id="GO:0005737">
    <property type="term" value="C:cytoplasm"/>
    <property type="evidence" value="ECO:0007669"/>
    <property type="project" value="UniProtKB-ARBA"/>
</dbReference>
<dbReference type="GO" id="GO:0000428">
    <property type="term" value="C:DNA-directed RNA polymerase complex"/>
    <property type="evidence" value="ECO:0007669"/>
    <property type="project" value="UniProtKB-KW"/>
</dbReference>
<dbReference type="GO" id="GO:0003677">
    <property type="term" value="F:DNA binding"/>
    <property type="evidence" value="ECO:0007669"/>
    <property type="project" value="UniProtKB-UniRule"/>
</dbReference>
<dbReference type="GO" id="GO:0003899">
    <property type="term" value="F:DNA-directed RNA polymerase activity"/>
    <property type="evidence" value="ECO:0007669"/>
    <property type="project" value="UniProtKB-UniRule"/>
</dbReference>
<dbReference type="GO" id="GO:0046983">
    <property type="term" value="F:protein dimerization activity"/>
    <property type="evidence" value="ECO:0007669"/>
    <property type="project" value="InterPro"/>
</dbReference>
<dbReference type="GO" id="GO:0006351">
    <property type="term" value="P:DNA-templated transcription"/>
    <property type="evidence" value="ECO:0007669"/>
    <property type="project" value="UniProtKB-UniRule"/>
</dbReference>
<dbReference type="CDD" id="cd06928">
    <property type="entry name" value="RNAP_alpha_NTD"/>
    <property type="match status" value="1"/>
</dbReference>
<dbReference type="FunFam" id="1.10.150.20:FF:000001">
    <property type="entry name" value="DNA-directed RNA polymerase subunit alpha"/>
    <property type="match status" value="1"/>
</dbReference>
<dbReference type="FunFam" id="2.170.120.12:FF:000001">
    <property type="entry name" value="DNA-directed RNA polymerase subunit alpha"/>
    <property type="match status" value="1"/>
</dbReference>
<dbReference type="Gene3D" id="1.10.150.20">
    <property type="entry name" value="5' to 3' exonuclease, C-terminal subdomain"/>
    <property type="match status" value="1"/>
</dbReference>
<dbReference type="Gene3D" id="2.170.120.12">
    <property type="entry name" value="DNA-directed RNA polymerase, insert domain"/>
    <property type="match status" value="1"/>
</dbReference>
<dbReference type="Gene3D" id="3.30.1360.10">
    <property type="entry name" value="RNA polymerase, RBP11-like subunit"/>
    <property type="match status" value="1"/>
</dbReference>
<dbReference type="HAMAP" id="MF_00059">
    <property type="entry name" value="RNApol_bact_RpoA"/>
    <property type="match status" value="1"/>
</dbReference>
<dbReference type="InterPro" id="IPR011262">
    <property type="entry name" value="DNA-dir_RNA_pol_insert"/>
</dbReference>
<dbReference type="InterPro" id="IPR011263">
    <property type="entry name" value="DNA-dir_RNA_pol_RpoA/D/Rpb3"/>
</dbReference>
<dbReference type="InterPro" id="IPR011773">
    <property type="entry name" value="DNA-dir_RpoA"/>
</dbReference>
<dbReference type="InterPro" id="IPR036603">
    <property type="entry name" value="RBP11-like"/>
</dbReference>
<dbReference type="InterPro" id="IPR011260">
    <property type="entry name" value="RNAP_asu_C"/>
</dbReference>
<dbReference type="InterPro" id="IPR036643">
    <property type="entry name" value="RNApol_insert_sf"/>
</dbReference>
<dbReference type="NCBIfam" id="NF003513">
    <property type="entry name" value="PRK05182.1-2"/>
    <property type="match status" value="1"/>
</dbReference>
<dbReference type="NCBIfam" id="NF003519">
    <property type="entry name" value="PRK05182.2-5"/>
    <property type="match status" value="1"/>
</dbReference>
<dbReference type="NCBIfam" id="TIGR02027">
    <property type="entry name" value="rpoA"/>
    <property type="match status" value="1"/>
</dbReference>
<dbReference type="Pfam" id="PF01000">
    <property type="entry name" value="RNA_pol_A_bac"/>
    <property type="match status" value="1"/>
</dbReference>
<dbReference type="Pfam" id="PF03118">
    <property type="entry name" value="RNA_pol_A_CTD"/>
    <property type="match status" value="1"/>
</dbReference>
<dbReference type="Pfam" id="PF01193">
    <property type="entry name" value="RNA_pol_L"/>
    <property type="match status" value="1"/>
</dbReference>
<dbReference type="SMART" id="SM00662">
    <property type="entry name" value="RPOLD"/>
    <property type="match status" value="1"/>
</dbReference>
<dbReference type="SUPFAM" id="SSF47789">
    <property type="entry name" value="C-terminal domain of RNA polymerase alpha subunit"/>
    <property type="match status" value="1"/>
</dbReference>
<dbReference type="SUPFAM" id="SSF56553">
    <property type="entry name" value="Insert subdomain of RNA polymerase alpha subunit"/>
    <property type="match status" value="1"/>
</dbReference>
<dbReference type="SUPFAM" id="SSF55257">
    <property type="entry name" value="RBP11-like subunits of RNA polymerase"/>
    <property type="match status" value="1"/>
</dbReference>
<sequence length="329" mass="36055">MLGSVTDFLKPRLVDIEQLSPTHAKVTLEPLERGFGHTLGNALRRILLSSMPGCAVAEVEIDGVLHEYSSKEGVQEDILEILLNLKGIAVKLEGKDEVILSLTKSGAGPVTAGDIIHGDDVVIVNPEHVICHLTGANAEISMRLRVQRGRGYVPASARLHTDDEDRPIGRLLLDAAFSPVVRIAYNVEAARVEQRTDLDKLVIDMETNGTLDPEEAIRRAATILAEQLDAFVDLRDVSVPEKKEDKPEFDPILLRPVDDLELTVRSANCLKAEAIHYIGDLVQRTEVELLKTPNLGKKSLTEIKDVLASRGLSLGMRLENWPPASLADN</sequence>
<evidence type="ECO:0000255" key="1">
    <source>
        <dbReference type="HAMAP-Rule" id="MF_00059"/>
    </source>
</evidence>
<keyword id="KW-0240">DNA-directed RNA polymerase</keyword>
<keyword id="KW-0548">Nucleotidyltransferase</keyword>
<keyword id="KW-1185">Reference proteome</keyword>
<keyword id="KW-0804">Transcription</keyword>
<keyword id="KW-0808">Transferase</keyword>
<protein>
    <recommendedName>
        <fullName evidence="1">DNA-directed RNA polymerase subunit alpha</fullName>
        <shortName evidence="1">RNAP subunit alpha</shortName>
        <ecNumber evidence="1">2.7.7.6</ecNumber>
    </recommendedName>
    <alternativeName>
        <fullName evidence="1">RNA polymerase subunit alpha</fullName>
    </alternativeName>
    <alternativeName>
        <fullName evidence="1">Transcriptase subunit alpha</fullName>
    </alternativeName>
</protein>
<feature type="chain" id="PRO_1000202360" description="DNA-directed RNA polymerase subunit alpha">
    <location>
        <begin position="1"/>
        <end position="329"/>
    </location>
</feature>
<feature type="region of interest" description="Alpha N-terminal domain (alpha-NTD)" evidence="1">
    <location>
        <begin position="1"/>
        <end position="235"/>
    </location>
</feature>
<feature type="region of interest" description="Alpha C-terminal domain (alpha-CTD)" evidence="1">
    <location>
        <begin position="249"/>
        <end position="329"/>
    </location>
</feature>
<gene>
    <name evidence="1" type="primary">rpoA</name>
    <name type="ordered locus">Tola_0124</name>
</gene>
<comment type="function">
    <text evidence="1">DNA-dependent RNA polymerase catalyzes the transcription of DNA into RNA using the four ribonucleoside triphosphates as substrates.</text>
</comment>
<comment type="catalytic activity">
    <reaction evidence="1">
        <text>RNA(n) + a ribonucleoside 5'-triphosphate = RNA(n+1) + diphosphate</text>
        <dbReference type="Rhea" id="RHEA:21248"/>
        <dbReference type="Rhea" id="RHEA-COMP:14527"/>
        <dbReference type="Rhea" id="RHEA-COMP:17342"/>
        <dbReference type="ChEBI" id="CHEBI:33019"/>
        <dbReference type="ChEBI" id="CHEBI:61557"/>
        <dbReference type="ChEBI" id="CHEBI:140395"/>
        <dbReference type="EC" id="2.7.7.6"/>
    </reaction>
</comment>
<comment type="subunit">
    <text evidence="1">Homodimer. The RNAP catalytic core consists of 2 alpha, 1 beta, 1 beta' and 1 omega subunit. When a sigma factor is associated with the core the holoenzyme is formed, which can initiate transcription.</text>
</comment>
<comment type="domain">
    <text evidence="1">The N-terminal domain is essential for RNAP assembly and basal transcription, whereas the C-terminal domain is involved in interaction with transcriptional regulators and with upstream promoter elements.</text>
</comment>
<comment type="similarity">
    <text evidence="1">Belongs to the RNA polymerase alpha chain family.</text>
</comment>
<accession>C4L7V5</accession>